<keyword id="KW-0131">Cell cycle</keyword>
<keyword id="KW-0132">Cell division</keyword>
<keyword id="KW-0133">Cell shape</keyword>
<keyword id="KW-0961">Cell wall biogenesis/degradation</keyword>
<keyword id="KW-0963">Cytoplasm</keyword>
<keyword id="KW-0326">Glycosidase</keyword>
<keyword id="KW-0378">Hydrolase</keyword>
<keyword id="KW-0573">Peptidoglycan synthesis</keyword>
<comment type="function">
    <text evidence="1">Plays a role in peptidoglycan recycling by cleaving the terminal beta-1,4-linked N-acetylglucosamine (GlcNAc) from peptide-linked peptidoglycan fragments, giving rise to free GlcNAc, anhydro-N-acetylmuramic acid and anhydro-N-acetylmuramic acid-linked peptides.</text>
</comment>
<comment type="catalytic activity">
    <reaction evidence="1">
        <text>Hydrolysis of terminal non-reducing N-acetyl-D-hexosamine residues in N-acetyl-beta-D-hexosaminides.</text>
        <dbReference type="EC" id="3.2.1.52"/>
    </reaction>
</comment>
<comment type="pathway">
    <text evidence="1">Cell wall biogenesis; peptidoglycan recycling.</text>
</comment>
<comment type="subcellular location">
    <subcellularLocation>
        <location evidence="1">Cytoplasm</location>
    </subcellularLocation>
</comment>
<comment type="similarity">
    <text evidence="1">Belongs to the glycosyl hydrolase 3 family. NagZ subfamily.</text>
</comment>
<name>NAGZ_ECO81</name>
<accession>B7MTN7</accession>
<evidence type="ECO:0000255" key="1">
    <source>
        <dbReference type="HAMAP-Rule" id="MF_00364"/>
    </source>
</evidence>
<reference key="1">
    <citation type="journal article" date="2009" name="PLoS Genet.">
        <title>Organised genome dynamics in the Escherichia coli species results in highly diverse adaptive paths.</title>
        <authorList>
            <person name="Touchon M."/>
            <person name="Hoede C."/>
            <person name="Tenaillon O."/>
            <person name="Barbe V."/>
            <person name="Baeriswyl S."/>
            <person name="Bidet P."/>
            <person name="Bingen E."/>
            <person name="Bonacorsi S."/>
            <person name="Bouchier C."/>
            <person name="Bouvet O."/>
            <person name="Calteau A."/>
            <person name="Chiapello H."/>
            <person name="Clermont O."/>
            <person name="Cruveiller S."/>
            <person name="Danchin A."/>
            <person name="Diard M."/>
            <person name="Dossat C."/>
            <person name="Karoui M.E."/>
            <person name="Frapy E."/>
            <person name="Garry L."/>
            <person name="Ghigo J.M."/>
            <person name="Gilles A.M."/>
            <person name="Johnson J."/>
            <person name="Le Bouguenec C."/>
            <person name="Lescat M."/>
            <person name="Mangenot S."/>
            <person name="Martinez-Jehanne V."/>
            <person name="Matic I."/>
            <person name="Nassif X."/>
            <person name="Oztas S."/>
            <person name="Petit M.A."/>
            <person name="Pichon C."/>
            <person name="Rouy Z."/>
            <person name="Ruf C.S."/>
            <person name="Schneider D."/>
            <person name="Tourret J."/>
            <person name="Vacherie B."/>
            <person name="Vallenet D."/>
            <person name="Medigue C."/>
            <person name="Rocha E.P.C."/>
            <person name="Denamur E."/>
        </authorList>
    </citation>
    <scope>NUCLEOTIDE SEQUENCE [LARGE SCALE GENOMIC DNA]</scope>
    <source>
        <strain>ED1a</strain>
    </source>
</reference>
<protein>
    <recommendedName>
        <fullName evidence="1">Beta-hexosaminidase</fullName>
        <ecNumber evidence="1">3.2.1.52</ecNumber>
    </recommendedName>
    <alternativeName>
        <fullName evidence="1">Beta-N-acetylhexosaminidase</fullName>
    </alternativeName>
    <alternativeName>
        <fullName evidence="1">N-acetyl-beta-glucosaminidase</fullName>
    </alternativeName>
</protein>
<dbReference type="EC" id="3.2.1.52" evidence="1"/>
<dbReference type="EMBL" id="CU928162">
    <property type="protein sequence ID" value="CAR07451.1"/>
    <property type="molecule type" value="Genomic_DNA"/>
</dbReference>
<dbReference type="RefSeq" id="WP_000529298.1">
    <property type="nucleotide sequence ID" value="NC_011745.1"/>
</dbReference>
<dbReference type="SMR" id="B7MTN7"/>
<dbReference type="CAZy" id="GH3">
    <property type="family name" value="Glycoside Hydrolase Family 3"/>
</dbReference>
<dbReference type="KEGG" id="ecq:ECED1_1250"/>
<dbReference type="HOGENOM" id="CLU_008392_0_0_6"/>
<dbReference type="UniPathway" id="UPA00544"/>
<dbReference type="Proteomes" id="UP000000748">
    <property type="component" value="Chromosome"/>
</dbReference>
<dbReference type="GO" id="GO:0005737">
    <property type="term" value="C:cytoplasm"/>
    <property type="evidence" value="ECO:0007669"/>
    <property type="project" value="UniProtKB-SubCell"/>
</dbReference>
<dbReference type="GO" id="GO:0004563">
    <property type="term" value="F:beta-N-acetylhexosaminidase activity"/>
    <property type="evidence" value="ECO:0007669"/>
    <property type="project" value="UniProtKB-UniRule"/>
</dbReference>
<dbReference type="GO" id="GO:0005975">
    <property type="term" value="P:carbohydrate metabolic process"/>
    <property type="evidence" value="ECO:0007669"/>
    <property type="project" value="InterPro"/>
</dbReference>
<dbReference type="GO" id="GO:0051301">
    <property type="term" value="P:cell division"/>
    <property type="evidence" value="ECO:0007669"/>
    <property type="project" value="UniProtKB-KW"/>
</dbReference>
<dbReference type="GO" id="GO:0071555">
    <property type="term" value="P:cell wall organization"/>
    <property type="evidence" value="ECO:0007669"/>
    <property type="project" value="UniProtKB-KW"/>
</dbReference>
<dbReference type="GO" id="GO:0009252">
    <property type="term" value="P:peptidoglycan biosynthetic process"/>
    <property type="evidence" value="ECO:0007669"/>
    <property type="project" value="UniProtKB-KW"/>
</dbReference>
<dbReference type="GO" id="GO:0009254">
    <property type="term" value="P:peptidoglycan turnover"/>
    <property type="evidence" value="ECO:0007669"/>
    <property type="project" value="UniProtKB-UniRule"/>
</dbReference>
<dbReference type="GO" id="GO:0008360">
    <property type="term" value="P:regulation of cell shape"/>
    <property type="evidence" value="ECO:0007669"/>
    <property type="project" value="UniProtKB-KW"/>
</dbReference>
<dbReference type="FunFam" id="3.20.20.300:FF:000001">
    <property type="entry name" value="Beta-hexosaminidase"/>
    <property type="match status" value="1"/>
</dbReference>
<dbReference type="Gene3D" id="3.20.20.300">
    <property type="entry name" value="Glycoside hydrolase, family 3, N-terminal domain"/>
    <property type="match status" value="1"/>
</dbReference>
<dbReference type="HAMAP" id="MF_00364">
    <property type="entry name" value="NagZ"/>
    <property type="match status" value="1"/>
</dbReference>
<dbReference type="InterPro" id="IPR022956">
    <property type="entry name" value="Beta_hexosaminidase_bac"/>
</dbReference>
<dbReference type="InterPro" id="IPR019800">
    <property type="entry name" value="Glyco_hydro_3_AS"/>
</dbReference>
<dbReference type="InterPro" id="IPR001764">
    <property type="entry name" value="Glyco_hydro_3_N"/>
</dbReference>
<dbReference type="InterPro" id="IPR036962">
    <property type="entry name" value="Glyco_hydro_3_N_sf"/>
</dbReference>
<dbReference type="InterPro" id="IPR017853">
    <property type="entry name" value="Glycoside_hydrolase_SF"/>
</dbReference>
<dbReference type="InterPro" id="IPR050226">
    <property type="entry name" value="NagZ_Beta-hexosaminidase"/>
</dbReference>
<dbReference type="NCBIfam" id="NF003740">
    <property type="entry name" value="PRK05337.1"/>
    <property type="match status" value="1"/>
</dbReference>
<dbReference type="PANTHER" id="PTHR30480:SF13">
    <property type="entry name" value="BETA-HEXOSAMINIDASE"/>
    <property type="match status" value="1"/>
</dbReference>
<dbReference type="PANTHER" id="PTHR30480">
    <property type="entry name" value="BETA-HEXOSAMINIDASE-RELATED"/>
    <property type="match status" value="1"/>
</dbReference>
<dbReference type="Pfam" id="PF00933">
    <property type="entry name" value="Glyco_hydro_3"/>
    <property type="match status" value="1"/>
</dbReference>
<dbReference type="SUPFAM" id="SSF51445">
    <property type="entry name" value="(Trans)glycosidases"/>
    <property type="match status" value="1"/>
</dbReference>
<dbReference type="PROSITE" id="PS00775">
    <property type="entry name" value="GLYCOSYL_HYDROL_F3"/>
    <property type="match status" value="1"/>
</dbReference>
<sequence length="341" mass="37572">MGPVMLDVEGYELDAEEREILAHPLVGGLILFTRNYHDPAQLRELVRQIRAASRNHLVVAVDQEGGRVQRFREGFTRLPAAQSFAALLGMEEGGKLAQEAGWLMASEMIAMDIDISFAPVLDVGHISAAIGERSYHADPQKALAIASRFIDGMHEAGMKTTGKHFPGHGAVTADSHKETPCDPRPQAEIRAKDMSVFSSLIRENKLDAIMPAHVIYSDVDPRPASGSPYWLKTVLRQELGFDGVIFSDDLSMEGAAIMGSYAERGQASLDAGCDMILVCNNRKGAVSVLDNLSPIKAERVTRLYHKGSFSRQELMDSARWKAISARLNQLHERWQEEKAGH</sequence>
<gene>
    <name evidence="1" type="primary">nagZ</name>
    <name type="ordered locus">ECED1_1250</name>
</gene>
<proteinExistence type="inferred from homology"/>
<feature type="chain" id="PRO_1000133664" description="Beta-hexosaminidase">
    <location>
        <begin position="1"/>
        <end position="341"/>
    </location>
</feature>
<feature type="active site" description="Proton donor/acceptor" evidence="1">
    <location>
        <position position="176"/>
    </location>
</feature>
<feature type="active site" description="Nucleophile" evidence="1">
    <location>
        <position position="248"/>
    </location>
</feature>
<feature type="binding site" evidence="1">
    <location>
        <position position="62"/>
    </location>
    <ligand>
        <name>substrate</name>
    </ligand>
</feature>
<feature type="binding site" evidence="1">
    <location>
        <position position="70"/>
    </location>
    <ligand>
        <name>substrate</name>
    </ligand>
</feature>
<feature type="binding site" evidence="1">
    <location>
        <position position="133"/>
    </location>
    <ligand>
        <name>substrate</name>
    </ligand>
</feature>
<feature type="binding site" evidence="1">
    <location>
        <begin position="163"/>
        <end position="164"/>
    </location>
    <ligand>
        <name>substrate</name>
    </ligand>
</feature>
<feature type="site" description="Important for catalytic activity" evidence="1">
    <location>
        <position position="174"/>
    </location>
</feature>
<organism>
    <name type="scientific">Escherichia coli O81 (strain ED1a)</name>
    <dbReference type="NCBI Taxonomy" id="585397"/>
    <lineage>
        <taxon>Bacteria</taxon>
        <taxon>Pseudomonadati</taxon>
        <taxon>Pseudomonadota</taxon>
        <taxon>Gammaproteobacteria</taxon>
        <taxon>Enterobacterales</taxon>
        <taxon>Enterobacteriaceae</taxon>
        <taxon>Escherichia</taxon>
    </lineage>
</organism>